<protein>
    <recommendedName>
        <fullName evidence="1">tRNA modification GTPase MnmE</fullName>
        <ecNumber evidence="1">3.6.-.-</ecNumber>
    </recommendedName>
</protein>
<comment type="function">
    <text evidence="1">Exhibits a very high intrinsic GTPase hydrolysis rate. Involved in the addition of a carboxymethylaminomethyl (cmnm) group at the wobble position (U34) of certain tRNAs, forming tRNA-cmnm(5)s(2)U34.</text>
</comment>
<comment type="cofactor">
    <cofactor evidence="1">
        <name>K(+)</name>
        <dbReference type="ChEBI" id="CHEBI:29103"/>
    </cofactor>
    <text evidence="1">Binds 1 potassium ion per subunit.</text>
</comment>
<comment type="subunit">
    <text evidence="1">Homodimer. Heterotetramer of two MnmE and two MnmG subunits.</text>
</comment>
<comment type="subcellular location">
    <subcellularLocation>
        <location evidence="1">Cytoplasm</location>
    </subcellularLocation>
</comment>
<comment type="similarity">
    <text evidence="1">Belongs to the TRAFAC class TrmE-Era-EngA-EngB-Septin-like GTPase superfamily. TrmE GTPase family.</text>
</comment>
<keyword id="KW-0963">Cytoplasm</keyword>
<keyword id="KW-0342">GTP-binding</keyword>
<keyword id="KW-0378">Hydrolase</keyword>
<keyword id="KW-0460">Magnesium</keyword>
<keyword id="KW-0479">Metal-binding</keyword>
<keyword id="KW-0547">Nucleotide-binding</keyword>
<keyword id="KW-0630">Potassium</keyword>
<keyword id="KW-0819">tRNA processing</keyword>
<proteinExistence type="inferred from homology"/>
<evidence type="ECO:0000255" key="1">
    <source>
        <dbReference type="HAMAP-Rule" id="MF_00379"/>
    </source>
</evidence>
<accession>Q14GV5</accession>
<reference key="1">
    <citation type="journal article" date="2007" name="PLoS ONE">
        <title>Genome sequencing shows that European isolates of Francisella tularensis subspecies tularensis are almost identical to US laboratory strain Schu S4.</title>
        <authorList>
            <person name="Chaudhuri R.R."/>
            <person name="Ren C.-P."/>
            <person name="Desmond L."/>
            <person name="Vincent G.A."/>
            <person name="Silman N.J."/>
            <person name="Brehm J.K."/>
            <person name="Elmore M.J."/>
            <person name="Hudson M.J."/>
            <person name="Forsman M."/>
            <person name="Isherwood K.E."/>
            <person name="Gurycova D."/>
            <person name="Minton N.P."/>
            <person name="Titball R.W."/>
            <person name="Pallen M.J."/>
            <person name="Vipond R."/>
        </authorList>
    </citation>
    <scope>NUCLEOTIDE SEQUENCE [LARGE SCALE GENOMIC DNA]</scope>
    <source>
        <strain>FSC 198</strain>
    </source>
</reference>
<organism>
    <name type="scientific">Francisella tularensis subsp. tularensis (strain FSC 198)</name>
    <dbReference type="NCBI Taxonomy" id="393115"/>
    <lineage>
        <taxon>Bacteria</taxon>
        <taxon>Pseudomonadati</taxon>
        <taxon>Pseudomonadota</taxon>
        <taxon>Gammaproteobacteria</taxon>
        <taxon>Thiotrichales</taxon>
        <taxon>Francisellaceae</taxon>
        <taxon>Francisella</taxon>
    </lineage>
</organism>
<name>MNME_FRAT1</name>
<gene>
    <name evidence="1" type="primary">mnmE</name>
    <name evidence="1" type="synonym">trmE</name>
    <name type="ordered locus">FTF1283</name>
</gene>
<feature type="chain" id="PRO_1000060040" description="tRNA modification GTPase MnmE">
    <location>
        <begin position="1"/>
        <end position="450"/>
    </location>
</feature>
<feature type="domain" description="TrmE-type G">
    <location>
        <begin position="214"/>
        <end position="374"/>
    </location>
</feature>
<feature type="binding site" evidence="1">
    <location>
        <position position="23"/>
    </location>
    <ligand>
        <name>(6S)-5-formyl-5,6,7,8-tetrahydrofolate</name>
        <dbReference type="ChEBI" id="CHEBI:57457"/>
    </ligand>
</feature>
<feature type="binding site" evidence="1">
    <location>
        <position position="79"/>
    </location>
    <ligand>
        <name>(6S)-5-formyl-5,6,7,8-tetrahydrofolate</name>
        <dbReference type="ChEBI" id="CHEBI:57457"/>
    </ligand>
</feature>
<feature type="binding site" evidence="1">
    <location>
        <position position="118"/>
    </location>
    <ligand>
        <name>(6S)-5-formyl-5,6,7,8-tetrahydrofolate</name>
        <dbReference type="ChEBI" id="CHEBI:57457"/>
    </ligand>
</feature>
<feature type="binding site" evidence="1">
    <location>
        <begin position="224"/>
        <end position="229"/>
    </location>
    <ligand>
        <name>GTP</name>
        <dbReference type="ChEBI" id="CHEBI:37565"/>
    </ligand>
</feature>
<feature type="binding site" evidence="1">
    <location>
        <position position="224"/>
    </location>
    <ligand>
        <name>K(+)</name>
        <dbReference type="ChEBI" id="CHEBI:29103"/>
    </ligand>
</feature>
<feature type="binding site" evidence="1">
    <location>
        <position position="228"/>
    </location>
    <ligand>
        <name>Mg(2+)</name>
        <dbReference type="ChEBI" id="CHEBI:18420"/>
    </ligand>
</feature>
<feature type="binding site" evidence="1">
    <location>
        <begin position="243"/>
        <end position="249"/>
    </location>
    <ligand>
        <name>GTP</name>
        <dbReference type="ChEBI" id="CHEBI:37565"/>
    </ligand>
</feature>
<feature type="binding site" evidence="1">
    <location>
        <position position="243"/>
    </location>
    <ligand>
        <name>K(+)</name>
        <dbReference type="ChEBI" id="CHEBI:29103"/>
    </ligand>
</feature>
<feature type="binding site" evidence="1">
    <location>
        <position position="245"/>
    </location>
    <ligand>
        <name>K(+)</name>
        <dbReference type="ChEBI" id="CHEBI:29103"/>
    </ligand>
</feature>
<feature type="binding site" evidence="1">
    <location>
        <position position="248"/>
    </location>
    <ligand>
        <name>K(+)</name>
        <dbReference type="ChEBI" id="CHEBI:29103"/>
    </ligand>
</feature>
<feature type="binding site" evidence="1">
    <location>
        <position position="249"/>
    </location>
    <ligand>
        <name>Mg(2+)</name>
        <dbReference type="ChEBI" id="CHEBI:18420"/>
    </ligand>
</feature>
<feature type="binding site" evidence="1">
    <location>
        <begin position="268"/>
        <end position="271"/>
    </location>
    <ligand>
        <name>GTP</name>
        <dbReference type="ChEBI" id="CHEBI:37565"/>
    </ligand>
</feature>
<feature type="binding site" evidence="1">
    <location>
        <position position="450"/>
    </location>
    <ligand>
        <name>(6S)-5-formyl-5,6,7,8-tetrahydrofolate</name>
        <dbReference type="ChEBI" id="CHEBI:57457"/>
    </ligand>
</feature>
<dbReference type="EC" id="3.6.-.-" evidence="1"/>
<dbReference type="EMBL" id="AM286280">
    <property type="protein sequence ID" value="CAL09299.1"/>
    <property type="molecule type" value="Genomic_DNA"/>
</dbReference>
<dbReference type="RefSeq" id="WP_003021964.1">
    <property type="nucleotide sequence ID" value="NC_008245.1"/>
</dbReference>
<dbReference type="SMR" id="Q14GV5"/>
<dbReference type="KEGG" id="ftf:FTF1283"/>
<dbReference type="HOGENOM" id="CLU_019624_4_1_6"/>
<dbReference type="GO" id="GO:0005829">
    <property type="term" value="C:cytosol"/>
    <property type="evidence" value="ECO:0007669"/>
    <property type="project" value="TreeGrafter"/>
</dbReference>
<dbReference type="GO" id="GO:0005525">
    <property type="term" value="F:GTP binding"/>
    <property type="evidence" value="ECO:0007669"/>
    <property type="project" value="UniProtKB-UniRule"/>
</dbReference>
<dbReference type="GO" id="GO:0003924">
    <property type="term" value="F:GTPase activity"/>
    <property type="evidence" value="ECO:0007669"/>
    <property type="project" value="UniProtKB-UniRule"/>
</dbReference>
<dbReference type="GO" id="GO:0046872">
    <property type="term" value="F:metal ion binding"/>
    <property type="evidence" value="ECO:0007669"/>
    <property type="project" value="UniProtKB-KW"/>
</dbReference>
<dbReference type="GO" id="GO:0030488">
    <property type="term" value="P:tRNA methylation"/>
    <property type="evidence" value="ECO:0007669"/>
    <property type="project" value="TreeGrafter"/>
</dbReference>
<dbReference type="GO" id="GO:0002098">
    <property type="term" value="P:tRNA wobble uridine modification"/>
    <property type="evidence" value="ECO:0007669"/>
    <property type="project" value="TreeGrafter"/>
</dbReference>
<dbReference type="CDD" id="cd04164">
    <property type="entry name" value="trmE"/>
    <property type="match status" value="1"/>
</dbReference>
<dbReference type="CDD" id="cd14858">
    <property type="entry name" value="TrmE_N"/>
    <property type="match status" value="1"/>
</dbReference>
<dbReference type="Gene3D" id="3.40.50.300">
    <property type="entry name" value="P-loop containing nucleotide triphosphate hydrolases"/>
    <property type="match status" value="1"/>
</dbReference>
<dbReference type="Gene3D" id="3.30.1360.120">
    <property type="entry name" value="Probable tRNA modification gtpase trme, domain 1"/>
    <property type="match status" value="1"/>
</dbReference>
<dbReference type="Gene3D" id="1.20.120.430">
    <property type="entry name" value="tRNA modification GTPase MnmE domain 2"/>
    <property type="match status" value="1"/>
</dbReference>
<dbReference type="HAMAP" id="MF_00379">
    <property type="entry name" value="GTPase_MnmE"/>
    <property type="match status" value="1"/>
</dbReference>
<dbReference type="InterPro" id="IPR031168">
    <property type="entry name" value="G_TrmE"/>
</dbReference>
<dbReference type="InterPro" id="IPR006073">
    <property type="entry name" value="GTP-bd"/>
</dbReference>
<dbReference type="InterPro" id="IPR018948">
    <property type="entry name" value="GTP-bd_TrmE_N"/>
</dbReference>
<dbReference type="InterPro" id="IPR004520">
    <property type="entry name" value="GTPase_MnmE"/>
</dbReference>
<dbReference type="InterPro" id="IPR027368">
    <property type="entry name" value="MnmE_dom2"/>
</dbReference>
<dbReference type="InterPro" id="IPR025867">
    <property type="entry name" value="MnmE_helical"/>
</dbReference>
<dbReference type="InterPro" id="IPR027417">
    <property type="entry name" value="P-loop_NTPase"/>
</dbReference>
<dbReference type="InterPro" id="IPR005225">
    <property type="entry name" value="Small_GTP-bd"/>
</dbReference>
<dbReference type="InterPro" id="IPR027266">
    <property type="entry name" value="TrmE/GcvT_dom1"/>
</dbReference>
<dbReference type="NCBIfam" id="TIGR00450">
    <property type="entry name" value="mnmE_trmE_thdF"/>
    <property type="match status" value="1"/>
</dbReference>
<dbReference type="NCBIfam" id="NF003661">
    <property type="entry name" value="PRK05291.1-3"/>
    <property type="match status" value="1"/>
</dbReference>
<dbReference type="NCBIfam" id="TIGR00231">
    <property type="entry name" value="small_GTP"/>
    <property type="match status" value="1"/>
</dbReference>
<dbReference type="PANTHER" id="PTHR42714">
    <property type="entry name" value="TRNA MODIFICATION GTPASE GTPBP3"/>
    <property type="match status" value="1"/>
</dbReference>
<dbReference type="PANTHER" id="PTHR42714:SF2">
    <property type="entry name" value="TRNA MODIFICATION GTPASE GTPBP3, MITOCHONDRIAL"/>
    <property type="match status" value="1"/>
</dbReference>
<dbReference type="Pfam" id="PF01926">
    <property type="entry name" value="MMR_HSR1"/>
    <property type="match status" value="1"/>
</dbReference>
<dbReference type="Pfam" id="PF12631">
    <property type="entry name" value="MnmE_helical"/>
    <property type="match status" value="1"/>
</dbReference>
<dbReference type="Pfam" id="PF10396">
    <property type="entry name" value="TrmE_N"/>
    <property type="match status" value="1"/>
</dbReference>
<dbReference type="PRINTS" id="PR00326">
    <property type="entry name" value="GTP1OBG"/>
</dbReference>
<dbReference type="SUPFAM" id="SSF52540">
    <property type="entry name" value="P-loop containing nucleoside triphosphate hydrolases"/>
    <property type="match status" value="1"/>
</dbReference>
<dbReference type="SUPFAM" id="SSF116878">
    <property type="entry name" value="TrmE connector domain"/>
    <property type="match status" value="1"/>
</dbReference>
<dbReference type="PROSITE" id="PS51709">
    <property type="entry name" value="G_TRME"/>
    <property type="match status" value="1"/>
</dbReference>
<sequence>MYTKDTIVAIATPQGNGGIGIIRISGIDALAIAEKLTKKQLKPRYATFCNVYNDNEIIDHGIIIFFKAPLSYTGEDVVEIQAHGNPFILNLIIKAALNCGARMAKAGEFTERAFLNNKLDLAQAEAVADIINASSEIAAKSAAKSLQGDFSKEINNLLEKLIYLRMYVEASIDFPEEEINFLEDQKIHSSLEEIYKVILAVKNSCKQGVILAEGITLILVGKPNAGKSSLLNALAGKESAIVTSIAGTTRDIVKEHIQINGVPMHIIDTAGLRNSDDIIESEGIKRAIKKIQEADQVLFVTDDYTNSQVKFSDIKEIIPEFYDQIPKDIDITYVHNKIDLLKEVPHNHANHIYISAENNIGIDKLKEHILNKVGYTNQNESIYTARERHVTAINNAFEHIKLAKEQLELGNGELLAEELLIVQEYLNSITGEFSSDDLLGEIFSSFCIGK</sequence>